<evidence type="ECO:0000250" key="1">
    <source>
        <dbReference type="UniProtKB" id="O08808"/>
    </source>
</evidence>
<evidence type="ECO:0000250" key="2">
    <source>
        <dbReference type="UniProtKB" id="Q80U19"/>
    </source>
</evidence>
<evidence type="ECO:0000255" key="3"/>
<evidence type="ECO:0000255" key="4">
    <source>
        <dbReference type="PROSITE-ProRule" id="PRU00577"/>
    </source>
</evidence>
<evidence type="ECO:0000255" key="5">
    <source>
        <dbReference type="PROSITE-ProRule" id="PRU00579"/>
    </source>
</evidence>
<evidence type="ECO:0000255" key="6">
    <source>
        <dbReference type="PROSITE-ProRule" id="PRU00774"/>
    </source>
</evidence>
<evidence type="ECO:0000256" key="7">
    <source>
        <dbReference type="SAM" id="MobiDB-lite"/>
    </source>
</evidence>
<evidence type="ECO:0000269" key="8">
    <source>
    </source>
</evidence>
<evidence type="ECO:0000269" key="9">
    <source>
    </source>
</evidence>
<evidence type="ECO:0000303" key="10">
    <source>
    </source>
</evidence>
<evidence type="ECO:0000303" key="11">
    <source>
    </source>
</evidence>
<evidence type="ECO:0000305" key="12"/>
<evidence type="ECO:0000312" key="13">
    <source>
        <dbReference type="HGNC" id="HGNC:18143"/>
    </source>
</evidence>
<evidence type="ECO:0007744" key="14">
    <source>
    </source>
</evidence>
<accession>Q86T65</accession>
<accession>G5EA45</accession>
<accession>Q5T4T8</accession>
<accession>Q5T4U0</accession>
<accession>Q9NQI5</accession>
<accession>Q9Y4G0</accession>
<name>DAAM2_HUMAN</name>
<reference key="1">
    <citation type="journal article" date="1997" name="DNA Res.">
        <title>Prediction of the coding sequences of unidentified human genes. VII. The complete sequences of 100 new cDNA clones from brain which can code for large proteins in vitro.</title>
        <authorList>
            <person name="Nagase T."/>
            <person name="Ishikawa K."/>
            <person name="Nakajima D."/>
            <person name="Ohira M."/>
            <person name="Seki N."/>
            <person name="Miyajima N."/>
            <person name="Tanaka A."/>
            <person name="Kotani H."/>
            <person name="Nomura N."/>
            <person name="Ohara O."/>
        </authorList>
    </citation>
    <scope>NUCLEOTIDE SEQUENCE [LARGE SCALE MRNA] (ISOFORM 1)</scope>
    <scope>TISSUE SPECIFICITY</scope>
    <source>
        <tissue>Brain</tissue>
    </source>
</reference>
<reference key="2">
    <citation type="submission" date="2005-08" db="EMBL/GenBank/DDBJ databases">
        <authorList>
            <person name="Ohara O."/>
            <person name="Nagase T."/>
            <person name="Kikuno R."/>
            <person name="Nomura N."/>
        </authorList>
    </citation>
    <scope>SEQUENCE REVISION</scope>
</reference>
<reference key="3">
    <citation type="journal article" date="2007" name="BMC Genomics">
        <title>The full-ORF clone resource of the German cDNA consortium.</title>
        <authorList>
            <person name="Bechtel S."/>
            <person name="Rosenfelder H."/>
            <person name="Duda A."/>
            <person name="Schmidt C.P."/>
            <person name="Ernst U."/>
            <person name="Wellenreuther R."/>
            <person name="Mehrle A."/>
            <person name="Schuster C."/>
            <person name="Bahr A."/>
            <person name="Bloecker H."/>
            <person name="Heubner D."/>
            <person name="Hoerlein A."/>
            <person name="Michel G."/>
            <person name="Wedler H."/>
            <person name="Koehrer K."/>
            <person name="Ottenwaelder B."/>
            <person name="Poustka A."/>
            <person name="Wiemann S."/>
            <person name="Schupp I."/>
        </authorList>
    </citation>
    <scope>NUCLEOTIDE SEQUENCE [LARGE SCALE MRNA] (ISOFORM 2)</scope>
    <source>
        <tissue>Spinal cord</tissue>
    </source>
</reference>
<reference key="4">
    <citation type="journal article" date="2003" name="Nature">
        <title>The DNA sequence and analysis of human chromosome 6.</title>
        <authorList>
            <person name="Mungall A.J."/>
            <person name="Palmer S.A."/>
            <person name="Sims S.K."/>
            <person name="Edwards C.A."/>
            <person name="Ashurst J.L."/>
            <person name="Wilming L."/>
            <person name="Jones M.C."/>
            <person name="Horton R."/>
            <person name="Hunt S.E."/>
            <person name="Scott C.E."/>
            <person name="Gilbert J.G.R."/>
            <person name="Clamp M.E."/>
            <person name="Bethel G."/>
            <person name="Milne S."/>
            <person name="Ainscough R."/>
            <person name="Almeida J.P."/>
            <person name="Ambrose K.D."/>
            <person name="Andrews T.D."/>
            <person name="Ashwell R.I.S."/>
            <person name="Babbage A.K."/>
            <person name="Bagguley C.L."/>
            <person name="Bailey J."/>
            <person name="Banerjee R."/>
            <person name="Barker D.J."/>
            <person name="Barlow K.F."/>
            <person name="Bates K."/>
            <person name="Beare D.M."/>
            <person name="Beasley H."/>
            <person name="Beasley O."/>
            <person name="Bird C.P."/>
            <person name="Blakey S.E."/>
            <person name="Bray-Allen S."/>
            <person name="Brook J."/>
            <person name="Brown A.J."/>
            <person name="Brown J.Y."/>
            <person name="Burford D.C."/>
            <person name="Burrill W."/>
            <person name="Burton J."/>
            <person name="Carder C."/>
            <person name="Carter N.P."/>
            <person name="Chapman J.C."/>
            <person name="Clark S.Y."/>
            <person name="Clark G."/>
            <person name="Clee C.M."/>
            <person name="Clegg S."/>
            <person name="Cobley V."/>
            <person name="Collier R.E."/>
            <person name="Collins J.E."/>
            <person name="Colman L.K."/>
            <person name="Corby N.R."/>
            <person name="Coville G.J."/>
            <person name="Culley K.M."/>
            <person name="Dhami P."/>
            <person name="Davies J."/>
            <person name="Dunn M."/>
            <person name="Earthrowl M.E."/>
            <person name="Ellington A.E."/>
            <person name="Evans K.A."/>
            <person name="Faulkner L."/>
            <person name="Francis M.D."/>
            <person name="Frankish A."/>
            <person name="Frankland J."/>
            <person name="French L."/>
            <person name="Garner P."/>
            <person name="Garnett J."/>
            <person name="Ghori M.J."/>
            <person name="Gilby L.M."/>
            <person name="Gillson C.J."/>
            <person name="Glithero R.J."/>
            <person name="Grafham D.V."/>
            <person name="Grant M."/>
            <person name="Gribble S."/>
            <person name="Griffiths C."/>
            <person name="Griffiths M.N.D."/>
            <person name="Hall R."/>
            <person name="Halls K.S."/>
            <person name="Hammond S."/>
            <person name="Harley J.L."/>
            <person name="Hart E.A."/>
            <person name="Heath P.D."/>
            <person name="Heathcott R."/>
            <person name="Holmes S.J."/>
            <person name="Howden P.J."/>
            <person name="Howe K.L."/>
            <person name="Howell G.R."/>
            <person name="Huckle E."/>
            <person name="Humphray S.J."/>
            <person name="Humphries M.D."/>
            <person name="Hunt A.R."/>
            <person name="Johnson C.M."/>
            <person name="Joy A.A."/>
            <person name="Kay M."/>
            <person name="Keenan S.J."/>
            <person name="Kimberley A.M."/>
            <person name="King A."/>
            <person name="Laird G.K."/>
            <person name="Langford C."/>
            <person name="Lawlor S."/>
            <person name="Leongamornlert D.A."/>
            <person name="Leversha M."/>
            <person name="Lloyd C.R."/>
            <person name="Lloyd D.M."/>
            <person name="Loveland J.E."/>
            <person name="Lovell J."/>
            <person name="Martin S."/>
            <person name="Mashreghi-Mohammadi M."/>
            <person name="Maslen G.L."/>
            <person name="Matthews L."/>
            <person name="McCann O.T."/>
            <person name="McLaren S.J."/>
            <person name="McLay K."/>
            <person name="McMurray A."/>
            <person name="Moore M.J.F."/>
            <person name="Mullikin J.C."/>
            <person name="Niblett D."/>
            <person name="Nickerson T."/>
            <person name="Novik K.L."/>
            <person name="Oliver K."/>
            <person name="Overton-Larty E.K."/>
            <person name="Parker A."/>
            <person name="Patel R."/>
            <person name="Pearce A.V."/>
            <person name="Peck A.I."/>
            <person name="Phillimore B.J.C.T."/>
            <person name="Phillips S."/>
            <person name="Plumb R.W."/>
            <person name="Porter K.M."/>
            <person name="Ramsey Y."/>
            <person name="Ranby S.A."/>
            <person name="Rice C.M."/>
            <person name="Ross M.T."/>
            <person name="Searle S.M."/>
            <person name="Sehra H.K."/>
            <person name="Sheridan E."/>
            <person name="Skuce C.D."/>
            <person name="Smith S."/>
            <person name="Smith M."/>
            <person name="Spraggon L."/>
            <person name="Squares S.L."/>
            <person name="Steward C.A."/>
            <person name="Sycamore N."/>
            <person name="Tamlyn-Hall G."/>
            <person name="Tester J."/>
            <person name="Theaker A.J."/>
            <person name="Thomas D.W."/>
            <person name="Thorpe A."/>
            <person name="Tracey A."/>
            <person name="Tromans A."/>
            <person name="Tubby B."/>
            <person name="Wall M."/>
            <person name="Wallis J.M."/>
            <person name="West A.P."/>
            <person name="White S.S."/>
            <person name="Whitehead S.L."/>
            <person name="Whittaker H."/>
            <person name="Wild A."/>
            <person name="Willey D.J."/>
            <person name="Wilmer T.E."/>
            <person name="Wood J.M."/>
            <person name="Wray P.W."/>
            <person name="Wyatt J.C."/>
            <person name="Young L."/>
            <person name="Younger R.M."/>
            <person name="Bentley D.R."/>
            <person name="Coulson A."/>
            <person name="Durbin R.M."/>
            <person name="Hubbard T."/>
            <person name="Sulston J.E."/>
            <person name="Dunham I."/>
            <person name="Rogers J."/>
            <person name="Beck S."/>
        </authorList>
    </citation>
    <scope>NUCLEOTIDE SEQUENCE [LARGE SCALE GENOMIC DNA]</scope>
</reference>
<reference key="5">
    <citation type="submission" date="2005-07" db="EMBL/GenBank/DDBJ databases">
        <authorList>
            <person name="Mural R.J."/>
            <person name="Istrail S."/>
            <person name="Sutton G.G."/>
            <person name="Florea L."/>
            <person name="Halpern A.L."/>
            <person name="Mobarry C.M."/>
            <person name="Lippert R."/>
            <person name="Walenz B."/>
            <person name="Shatkay H."/>
            <person name="Dew I."/>
            <person name="Miller J.R."/>
            <person name="Flanigan M.J."/>
            <person name="Edwards N.J."/>
            <person name="Bolanos R."/>
            <person name="Fasulo D."/>
            <person name="Halldorsson B.V."/>
            <person name="Hannenhalli S."/>
            <person name="Turner R."/>
            <person name="Yooseph S."/>
            <person name="Lu F."/>
            <person name="Nusskern D.R."/>
            <person name="Shue B.C."/>
            <person name="Zheng X.H."/>
            <person name="Zhong F."/>
            <person name="Delcher A.L."/>
            <person name="Huson D.H."/>
            <person name="Kravitz S.A."/>
            <person name="Mouchard L."/>
            <person name="Reinert K."/>
            <person name="Remington K.A."/>
            <person name="Clark A.G."/>
            <person name="Waterman M.S."/>
            <person name="Eichler E.E."/>
            <person name="Adams M.D."/>
            <person name="Hunkapiller M.W."/>
            <person name="Myers E.W."/>
            <person name="Venter J.C."/>
        </authorList>
    </citation>
    <scope>NUCLEOTIDE SEQUENCE [LARGE SCALE GENOMIC DNA]</scope>
</reference>
<reference key="6">
    <citation type="journal article" date="2014" name="J. Proteomics">
        <title>An enzyme assisted RP-RPLC approach for in-depth analysis of human liver phosphoproteome.</title>
        <authorList>
            <person name="Bian Y."/>
            <person name="Song C."/>
            <person name="Cheng K."/>
            <person name="Dong M."/>
            <person name="Wang F."/>
            <person name="Huang J."/>
            <person name="Sun D."/>
            <person name="Wang L."/>
            <person name="Ye M."/>
            <person name="Zou H."/>
        </authorList>
    </citation>
    <scope>PHOSPHORYLATION [LARGE SCALE ANALYSIS] AT SER-1015</scope>
    <scope>IDENTIFICATION BY MASS SPECTROMETRY [LARGE SCALE ANALYSIS]</scope>
    <source>
        <tissue>Liver</tissue>
    </source>
</reference>
<reference key="7">
    <citation type="journal article" date="2020" name="Am. J. Hum. Genet.">
        <title>DAAM2 variants cause nephrotic syndrome via actin dysregulation.</title>
        <authorList>
            <person name="Schneider R."/>
            <person name="Deutsch K."/>
            <person name="Hoeprich G.J."/>
            <person name="Marquez J."/>
            <person name="Hermle T."/>
            <person name="Braun D.A."/>
            <person name="Seltzsam S."/>
            <person name="Kitzler T.M."/>
            <person name="Mao Y."/>
            <person name="Buerger F."/>
            <person name="Majmundar A.J."/>
            <person name="Onuchic-Whitford A.C."/>
            <person name="Kolvenbach C.M."/>
            <person name="Schierbaum L."/>
            <person name="Schneider S."/>
            <person name="Halawi A.A."/>
            <person name="Nakayama M."/>
            <person name="Mann N."/>
            <person name="Connaughton D.M."/>
            <person name="Klaembt V."/>
            <person name="Wagner M."/>
            <person name="Riedhammer K.M."/>
            <person name="Renders L."/>
            <person name="Katsura Y."/>
            <person name="Thumkeo D."/>
            <person name="Soliman N.A."/>
            <person name="Mane S."/>
            <person name="Lifton R.P."/>
            <person name="Shril S."/>
            <person name="Khokha M.K."/>
            <person name="Hoefele J."/>
            <person name="Goode B.L."/>
            <person name="Hildebrandt F."/>
        </authorList>
    </citation>
    <scope>FUNCTION</scope>
    <scope>TISSUE SPECIFICITY</scope>
    <scope>INTERACTION WITH INF2</scope>
    <scope>INVOLVEMENT IN NPHS24</scope>
    <scope>VARIANTS NPHS24 GLN-121; GLN-335; 445-ARG--TYR-1068 DEL; HIS-582 AND LEU-1028</scope>
    <scope>CHARACTERIZATION OF VARIANTS NPHS24 GLN-121; GLN-335; 445-ARG--TYR-1068 DEL; HIS-582 AND LEU-1028</scope>
</reference>
<gene>
    <name evidence="13" type="primary">DAAM2</name>
    <name evidence="11" type="synonym">KIAA0381</name>
</gene>
<dbReference type="EMBL" id="AB002379">
    <property type="protein sequence ID" value="BAA20835.2"/>
    <property type="status" value="ALT_INIT"/>
    <property type="molecule type" value="mRNA"/>
</dbReference>
<dbReference type="EMBL" id="AL833083">
    <property type="protein sequence ID" value="CAD89973.1"/>
    <property type="molecule type" value="mRNA"/>
</dbReference>
<dbReference type="EMBL" id="AL136089">
    <property type="protein sequence ID" value="CAI20010.2"/>
    <property type="molecule type" value="Genomic_DNA"/>
</dbReference>
<dbReference type="EMBL" id="FO393411">
    <property type="protein sequence ID" value="CAI20010.2"/>
    <property type="status" value="JOINED"/>
    <property type="molecule type" value="Genomic_DNA"/>
</dbReference>
<dbReference type="EMBL" id="AL161439">
    <property type="status" value="NOT_ANNOTATED_CDS"/>
    <property type="molecule type" value="Genomic_DNA"/>
</dbReference>
<dbReference type="EMBL" id="AL357412">
    <property type="status" value="NOT_ANNOTATED_CDS"/>
    <property type="molecule type" value="Genomic_DNA"/>
</dbReference>
<dbReference type="EMBL" id="AL590999">
    <property type="status" value="NOT_ANNOTATED_CDS"/>
    <property type="molecule type" value="Genomic_DNA"/>
</dbReference>
<dbReference type="EMBL" id="AL592158">
    <property type="status" value="NOT_ANNOTATED_CDS"/>
    <property type="molecule type" value="Genomic_DNA"/>
</dbReference>
<dbReference type="EMBL" id="CH471081">
    <property type="protein sequence ID" value="EAX03996.1"/>
    <property type="molecule type" value="Genomic_DNA"/>
</dbReference>
<dbReference type="CCDS" id="CCDS54999.1">
    <molecule id="Q86T65-4"/>
</dbReference>
<dbReference type="CCDS" id="CCDS56426.1">
    <molecule id="Q86T65-3"/>
</dbReference>
<dbReference type="RefSeq" id="NP_001188356.1">
    <molecule id="Q86T65-3"/>
    <property type="nucleotide sequence ID" value="NM_001201427.2"/>
</dbReference>
<dbReference type="RefSeq" id="NP_056160.2">
    <molecule id="Q86T65-4"/>
    <property type="nucleotide sequence ID" value="NM_015345.3"/>
</dbReference>
<dbReference type="RefSeq" id="XP_047274497.1">
    <molecule id="Q86T65-3"/>
    <property type="nucleotide sequence ID" value="XM_047418541.1"/>
</dbReference>
<dbReference type="RefSeq" id="XP_054210935.1">
    <molecule id="Q86T65-3"/>
    <property type="nucleotide sequence ID" value="XM_054354960.1"/>
</dbReference>
<dbReference type="SMR" id="Q86T65"/>
<dbReference type="BioGRID" id="117049">
    <property type="interactions" value="30"/>
</dbReference>
<dbReference type="FunCoup" id="Q86T65">
    <property type="interactions" value="320"/>
</dbReference>
<dbReference type="IntAct" id="Q86T65">
    <property type="interactions" value="14"/>
</dbReference>
<dbReference type="STRING" id="9606.ENSP00000381876"/>
<dbReference type="GlyGen" id="Q86T65">
    <property type="glycosylation" value="2 sites, 1 O-linked glycan (1 site)"/>
</dbReference>
<dbReference type="iPTMnet" id="Q86T65"/>
<dbReference type="PhosphoSitePlus" id="Q86T65"/>
<dbReference type="SwissPalm" id="Q86T65"/>
<dbReference type="BioMuta" id="DAAM2"/>
<dbReference type="DMDM" id="62906888"/>
<dbReference type="jPOST" id="Q86T65"/>
<dbReference type="MassIVE" id="Q86T65"/>
<dbReference type="PaxDb" id="9606-ENSP00000381876"/>
<dbReference type="PeptideAtlas" id="Q86T65"/>
<dbReference type="ProteomicsDB" id="34135"/>
<dbReference type="ProteomicsDB" id="69664">
    <molecule id="Q86T65-3"/>
</dbReference>
<dbReference type="Antibodypedia" id="53613">
    <property type="antibodies" value="208 antibodies from 28 providers"/>
</dbReference>
<dbReference type="DNASU" id="23500"/>
<dbReference type="Ensembl" id="ENST00000274867.9">
    <molecule id="Q86T65-3"/>
    <property type="protein sequence ID" value="ENSP00000274867.4"/>
    <property type="gene ID" value="ENSG00000146122.17"/>
</dbReference>
<dbReference type="Ensembl" id="ENST00000398904.6">
    <molecule id="Q86T65-3"/>
    <property type="protein sequence ID" value="ENSP00000381876.2"/>
    <property type="gene ID" value="ENSG00000146122.17"/>
</dbReference>
<dbReference type="Ensembl" id="ENST00000538976.5">
    <molecule id="Q86T65-4"/>
    <property type="protein sequence ID" value="ENSP00000437808.1"/>
    <property type="gene ID" value="ENSG00000146122.17"/>
</dbReference>
<dbReference type="GeneID" id="23500"/>
<dbReference type="KEGG" id="hsa:23500"/>
<dbReference type="MANE-Select" id="ENST00000274867.9">
    <property type="protein sequence ID" value="ENSP00000274867.4"/>
    <property type="RefSeq nucleotide sequence ID" value="NM_001201427.2"/>
    <property type="RefSeq protein sequence ID" value="NP_001188356.1"/>
</dbReference>
<dbReference type="UCSC" id="uc003oow.4">
    <molecule id="Q86T65-3"/>
    <property type="organism name" value="human"/>
</dbReference>
<dbReference type="AGR" id="HGNC:18143"/>
<dbReference type="CTD" id="23500"/>
<dbReference type="DisGeNET" id="23500"/>
<dbReference type="GeneCards" id="DAAM2"/>
<dbReference type="HGNC" id="HGNC:18143">
    <property type="gene designation" value="DAAM2"/>
</dbReference>
<dbReference type="HPA" id="ENSG00000146122">
    <property type="expression patterns" value="Tissue enhanced (brain)"/>
</dbReference>
<dbReference type="MalaCards" id="DAAM2"/>
<dbReference type="MIM" id="606627">
    <property type="type" value="gene"/>
</dbReference>
<dbReference type="MIM" id="619263">
    <property type="type" value="phenotype"/>
</dbReference>
<dbReference type="neXtProt" id="NX_Q86T65"/>
<dbReference type="OpenTargets" id="ENSG00000146122"/>
<dbReference type="Orphanet" id="656">
    <property type="disease" value="Hereditary steroid-resistant nephrotic syndrome"/>
</dbReference>
<dbReference type="PharmGKB" id="PA27130"/>
<dbReference type="VEuPathDB" id="HostDB:ENSG00000146122"/>
<dbReference type="eggNOG" id="KOG1922">
    <property type="taxonomic scope" value="Eukaryota"/>
</dbReference>
<dbReference type="GeneTree" id="ENSGT00940000157801"/>
<dbReference type="HOGENOM" id="CLU_002356_1_0_1"/>
<dbReference type="InParanoid" id="Q86T65"/>
<dbReference type="OrthoDB" id="1104827at2759"/>
<dbReference type="PAN-GO" id="Q86T65">
    <property type="GO annotations" value="3 GO annotations based on evolutionary models"/>
</dbReference>
<dbReference type="PhylomeDB" id="Q86T65"/>
<dbReference type="TreeFam" id="TF314602"/>
<dbReference type="PathwayCommons" id="Q86T65"/>
<dbReference type="SignaLink" id="Q86T65"/>
<dbReference type="BioGRID-ORCS" id="23500">
    <property type="hits" value="8 hits in 1151 CRISPR screens"/>
</dbReference>
<dbReference type="CD-CODE" id="FB4E32DD">
    <property type="entry name" value="Presynaptic clusters and postsynaptic densities"/>
</dbReference>
<dbReference type="ChiTaRS" id="DAAM2">
    <property type="organism name" value="human"/>
</dbReference>
<dbReference type="GenomeRNAi" id="23500"/>
<dbReference type="Pharos" id="Q86T65">
    <property type="development level" value="Tbio"/>
</dbReference>
<dbReference type="PRO" id="PR:Q86T65"/>
<dbReference type="Proteomes" id="UP000005640">
    <property type="component" value="Chromosome 6"/>
</dbReference>
<dbReference type="RNAct" id="Q86T65">
    <property type="molecule type" value="protein"/>
</dbReference>
<dbReference type="Bgee" id="ENSG00000146122">
    <property type="expression patterns" value="Expressed in corpus callosum and 190 other cell types or tissues"/>
</dbReference>
<dbReference type="ExpressionAtlas" id="Q86T65">
    <property type="expression patterns" value="baseline and differential"/>
</dbReference>
<dbReference type="GO" id="GO:0070062">
    <property type="term" value="C:extracellular exosome"/>
    <property type="evidence" value="ECO:0007005"/>
    <property type="project" value="UniProtKB"/>
</dbReference>
<dbReference type="GO" id="GO:0003779">
    <property type="term" value="F:actin binding"/>
    <property type="evidence" value="ECO:0007669"/>
    <property type="project" value="InterPro"/>
</dbReference>
<dbReference type="GO" id="GO:0031267">
    <property type="term" value="F:small GTPase binding"/>
    <property type="evidence" value="ECO:0007669"/>
    <property type="project" value="InterPro"/>
</dbReference>
<dbReference type="GO" id="GO:0030036">
    <property type="term" value="P:actin cytoskeleton organization"/>
    <property type="evidence" value="ECO:0007669"/>
    <property type="project" value="InterPro"/>
</dbReference>
<dbReference type="GO" id="GO:0007368">
    <property type="term" value="P:determination of left/right symmetry"/>
    <property type="evidence" value="ECO:0007669"/>
    <property type="project" value="Ensembl"/>
</dbReference>
<dbReference type="GO" id="GO:0021516">
    <property type="term" value="P:dorsal spinal cord development"/>
    <property type="evidence" value="ECO:0000250"/>
    <property type="project" value="UniProtKB"/>
</dbReference>
<dbReference type="GO" id="GO:0048715">
    <property type="term" value="P:negative regulation of oligodendrocyte differentiation"/>
    <property type="evidence" value="ECO:0000250"/>
    <property type="project" value="UniProtKB"/>
</dbReference>
<dbReference type="GO" id="GO:0090521">
    <property type="term" value="P:podocyte cell migration"/>
    <property type="evidence" value="ECO:0000314"/>
    <property type="project" value="UniProtKB"/>
</dbReference>
<dbReference type="GO" id="GO:0090263">
    <property type="term" value="P:positive regulation of canonical Wnt signaling pathway"/>
    <property type="evidence" value="ECO:0000250"/>
    <property type="project" value="UniProtKB"/>
</dbReference>
<dbReference type="GO" id="GO:0030335">
    <property type="term" value="P:positive regulation of cell migration"/>
    <property type="evidence" value="ECO:0000315"/>
    <property type="project" value="BHF-UCL"/>
</dbReference>
<dbReference type="GO" id="GO:0032956">
    <property type="term" value="P:regulation of actin cytoskeleton organization"/>
    <property type="evidence" value="ECO:0000315"/>
    <property type="project" value="BHF-UCL"/>
</dbReference>
<dbReference type="GO" id="GO:0030833">
    <property type="term" value="P:regulation of actin filament polymerization"/>
    <property type="evidence" value="ECO:0000314"/>
    <property type="project" value="UniProtKB"/>
</dbReference>
<dbReference type="GO" id="GO:0060828">
    <property type="term" value="P:regulation of canonical Wnt signaling pathway"/>
    <property type="evidence" value="ECO:0000250"/>
    <property type="project" value="UniProtKB"/>
</dbReference>
<dbReference type="GO" id="GO:0051489">
    <property type="term" value="P:regulation of filopodium assembly"/>
    <property type="evidence" value="ECO:0000314"/>
    <property type="project" value="UniProtKB"/>
</dbReference>
<dbReference type="GO" id="GO:2000050">
    <property type="term" value="P:regulation of non-canonical Wnt signaling pathway"/>
    <property type="evidence" value="ECO:0000250"/>
    <property type="project" value="UniProtKB"/>
</dbReference>
<dbReference type="GO" id="GO:0016055">
    <property type="term" value="P:Wnt signaling pathway"/>
    <property type="evidence" value="ECO:0007669"/>
    <property type="project" value="UniProtKB-KW"/>
</dbReference>
<dbReference type="FunFam" id="1.10.238.150:FF:000001">
    <property type="entry name" value="Dishevelled associated activator of morphogenesis 1"/>
    <property type="match status" value="1"/>
</dbReference>
<dbReference type="FunFam" id="1.20.58.2220:FF:000002">
    <property type="entry name" value="Dishevelled associated activator of morphogenesis 1"/>
    <property type="match status" value="1"/>
</dbReference>
<dbReference type="FunFam" id="1.25.10.10:FF:000012">
    <property type="entry name" value="Dishevelled associated activator of morphogenesis 2"/>
    <property type="match status" value="1"/>
</dbReference>
<dbReference type="Gene3D" id="1.20.58.2220">
    <property type="entry name" value="Formin, FH2 domain"/>
    <property type="match status" value="1"/>
</dbReference>
<dbReference type="Gene3D" id="1.10.238.150">
    <property type="entry name" value="Formin, FH3 diaphanous domain"/>
    <property type="match status" value="1"/>
</dbReference>
<dbReference type="Gene3D" id="1.25.10.10">
    <property type="entry name" value="Leucine-rich Repeat Variant"/>
    <property type="match status" value="1"/>
</dbReference>
<dbReference type="InterPro" id="IPR011989">
    <property type="entry name" value="ARM-like"/>
</dbReference>
<dbReference type="InterPro" id="IPR016024">
    <property type="entry name" value="ARM-type_fold"/>
</dbReference>
<dbReference type="InterPro" id="IPR014767">
    <property type="entry name" value="DAD_dom"/>
</dbReference>
<dbReference type="InterPro" id="IPR015425">
    <property type="entry name" value="FH2_Formin"/>
</dbReference>
<dbReference type="InterPro" id="IPR042201">
    <property type="entry name" value="FH2_Formin_sf"/>
</dbReference>
<dbReference type="InterPro" id="IPR010472">
    <property type="entry name" value="FH3_dom"/>
</dbReference>
<dbReference type="InterPro" id="IPR051425">
    <property type="entry name" value="Formin_Homology"/>
</dbReference>
<dbReference type="InterPro" id="IPR014768">
    <property type="entry name" value="GBD/FH3_dom"/>
</dbReference>
<dbReference type="InterPro" id="IPR010473">
    <property type="entry name" value="GTPase-bd"/>
</dbReference>
<dbReference type="PANTHER" id="PTHR45725:SF7">
    <property type="entry name" value="DISHEVELED-ASSOCIATED ACTIVATOR OF MORPHOGENESIS 2"/>
    <property type="match status" value="1"/>
</dbReference>
<dbReference type="PANTHER" id="PTHR45725">
    <property type="entry name" value="FORMIN HOMOLOGY 2 FAMILY MEMBER"/>
    <property type="match status" value="1"/>
</dbReference>
<dbReference type="Pfam" id="PF06367">
    <property type="entry name" value="Drf_FH3"/>
    <property type="match status" value="1"/>
</dbReference>
<dbReference type="Pfam" id="PF06371">
    <property type="entry name" value="Drf_GBD"/>
    <property type="match status" value="1"/>
</dbReference>
<dbReference type="Pfam" id="PF02181">
    <property type="entry name" value="FH2"/>
    <property type="match status" value="1"/>
</dbReference>
<dbReference type="SMART" id="SM01139">
    <property type="entry name" value="Drf_FH3"/>
    <property type="match status" value="1"/>
</dbReference>
<dbReference type="SMART" id="SM01140">
    <property type="entry name" value="Drf_GBD"/>
    <property type="match status" value="1"/>
</dbReference>
<dbReference type="SMART" id="SM00498">
    <property type="entry name" value="FH2"/>
    <property type="match status" value="1"/>
</dbReference>
<dbReference type="SUPFAM" id="SSF48371">
    <property type="entry name" value="ARM repeat"/>
    <property type="match status" value="1"/>
</dbReference>
<dbReference type="SUPFAM" id="SSF101447">
    <property type="entry name" value="Formin homology 2 domain (FH2 domain)"/>
    <property type="match status" value="1"/>
</dbReference>
<dbReference type="PROSITE" id="PS51231">
    <property type="entry name" value="DAD"/>
    <property type="match status" value="1"/>
</dbReference>
<dbReference type="PROSITE" id="PS51444">
    <property type="entry name" value="FH2"/>
    <property type="match status" value="1"/>
</dbReference>
<dbReference type="PROSITE" id="PS51232">
    <property type="entry name" value="GBD_FH3"/>
    <property type="match status" value="1"/>
</dbReference>
<feature type="chain" id="PRO_0000194909" description="Disheveled-associated activator of morphogenesis 2">
    <location>
        <begin position="1"/>
        <end position="1068"/>
    </location>
</feature>
<feature type="domain" description="GBD/FH3" evidence="5">
    <location>
        <begin position="40"/>
        <end position="416"/>
    </location>
</feature>
<feature type="domain" description="FH1">
    <location>
        <begin position="518"/>
        <end position="594"/>
    </location>
</feature>
<feature type="domain" description="FH2" evidence="6">
    <location>
        <begin position="595"/>
        <end position="994"/>
    </location>
</feature>
<feature type="domain" description="DAD" evidence="4">
    <location>
        <begin position="1016"/>
        <end position="1048"/>
    </location>
</feature>
<feature type="region of interest" description="Disordered" evidence="7">
    <location>
        <begin position="514"/>
        <end position="586"/>
    </location>
</feature>
<feature type="coiled-coil region" evidence="3">
    <location>
        <begin position="434"/>
        <end position="516"/>
    </location>
</feature>
<feature type="compositionally biased region" description="Pro residues" evidence="7">
    <location>
        <begin position="540"/>
        <end position="572"/>
    </location>
</feature>
<feature type="modified residue" description="Phosphoserine" evidence="14">
    <location>
        <position position="1015"/>
    </location>
</feature>
<feature type="splice variant" id="VSP_047360" description="In isoform 2." evidence="10">
    <location>
        <position position="894"/>
    </location>
</feature>
<feature type="sequence variant" id="VAR_055805" description="In dbSNP:rs6919807.">
    <original>R</original>
    <variation>H</variation>
    <location>
        <position position="105"/>
    </location>
</feature>
<feature type="sequence variant" id="VAR_085585" description="In NPHS24; uncertain significance; affects the regulation of filopodia formation." evidence="8">
    <original>E</original>
    <variation>Q</variation>
    <location>
        <position position="121"/>
    </location>
</feature>
<feature type="sequence variant" id="VAR_085586" description="In NPHS24; uncertain significance; affects the regulation of filopodia formation." evidence="8">
    <original>R</original>
    <variation>Q</variation>
    <location>
        <position position="335"/>
    </location>
</feature>
<feature type="sequence variant" id="VAR_085587" description="In NPHS24; affects the regulation of filopodia formation." evidence="8">
    <location>
        <begin position="445"/>
        <end position="1068"/>
    </location>
</feature>
<feature type="sequence variant" id="VAR_085588" description="In NPHS24; uncertain significance; affects the regulation of filopodia formation." evidence="8">
    <original>P</original>
    <variation>H</variation>
    <location>
        <position position="582"/>
    </location>
</feature>
<feature type="sequence variant" id="VAR_055806" description="In dbSNP:rs34699846.">
    <original>R</original>
    <variation>H</variation>
    <location>
        <position position="617"/>
    </location>
</feature>
<feature type="sequence variant" id="VAR_085589" description="In NPHS24; uncertain significance; affects the regulation of filopodia formation." evidence="8">
    <original>S</original>
    <variation>L</variation>
    <location>
        <position position="1028"/>
    </location>
</feature>
<feature type="sequence conflict" description="In Ref. 3; CAD89973." evidence="12" ref="3">
    <original>R</original>
    <variation>W</variation>
    <location>
        <position position="414"/>
    </location>
</feature>
<feature type="sequence conflict" description="In Ref. 3; CAD89973." evidence="12" ref="3">
    <original>Q</original>
    <variation>R</variation>
    <location>
        <position position="901"/>
    </location>
</feature>
<feature type="sequence conflict" description="In Ref. 3; CAD89973." evidence="12" ref="3">
    <original>R</original>
    <variation>W</variation>
    <location>
        <position position="1003"/>
    </location>
</feature>
<comment type="function">
    <text evidence="2 8">Key regulator of the Wnt signaling pathway, which is required for various processes during development, such as dorsal patterning, determination of left/right symmetry or myelination in the central nervous system. Acts downstream of Wnt ligands and upstream of beta-catenin (CTNNB1). Required for canonical Wnt signaling pathway during patterning in the dorsal spinal cord by promoting the aggregation of Disheveled (Dvl) complexes, thereby clustering and formation of Wnt receptor signalosomes and potentiating Wnt activity. During dorsal patterning of the spinal cord, inhibits oligodendrocytes differentiation via interaction with PIP5K1A. Also regulates non-canonical Wnt signaling pathway. Acts downstream of PITX2 in the developing gut and is required for left/right asymmetry within dorsal mesentery: affects mesenchymal condensation by lengthening cadherin-based junctions through WNT5A and non-canonical Wnt signaling, inducing polarized condensation in the left dorsal mesentery necessary to initiate gut rotation. Together with DAAM1, required for myocardial maturation and sarcomere assembly. Is a regulator of actin nucleation and elongation, filopodia formation and podocyte migration (PubMed:33232676).</text>
</comment>
<comment type="subunit">
    <text evidence="2 8">Interacts with DVL3. Interacts with INF2 (PubMed:33232676).</text>
</comment>
<comment type="alternative products">
    <event type="alternative splicing"/>
    <isoform>
        <id>Q86T65-3</id>
        <name>1</name>
        <sequence type="displayed"/>
    </isoform>
    <isoform>
        <id>Q86T65-4</id>
        <name>2</name>
        <sequence type="described" ref="VSP_047360"/>
    </isoform>
</comment>
<comment type="tissue specificity">
    <text evidence="8 9">Expressed in most tissues examined. Expressed in kidney glomeruli (PubMed:33232676).</text>
</comment>
<comment type="domain">
    <text evidence="1">The DAD domain regulates activation via an autoinhibitory interaction with the GBD/FH3 domain. This autoinhibition is released upon competitive binding of an activated GTPase. The release of DAD allows the FH2 domain to then nucleate and elongate nonbranched actin filaments (By similarity).</text>
</comment>
<comment type="disease" evidence="8">
    <disease id="DI-06075">
        <name>Nephrotic syndrome 24</name>
        <acronym>NPHS24</acronym>
        <description>A form of nephrotic syndrome, a renal disease clinically characterized by severe proteinuria, resulting in complications such as hypoalbuminemia, hyperlipidemia and edema. Kidney biopsies show non-specific histologic changes such as focal segmental glomerulosclerosis and diffuse mesangial proliferation. Some affected individuals have an inherited steroid-resistant form that progresses to end-stage renal failure. NPHS24 is an autosomal recessive, slowly progressive form. Most patients eventually develop end-stage renal disease.</description>
        <dbReference type="MIM" id="619263"/>
    </disease>
    <text>The disease may be caused by variants affecting the gene represented in this entry.</text>
</comment>
<comment type="similarity">
    <text evidence="12">Belongs to the formin homology family.</text>
</comment>
<comment type="sequence caution" evidence="12">
    <conflict type="erroneous initiation">
        <sequence resource="EMBL-CDS" id="BAA20835"/>
    </conflict>
</comment>
<proteinExistence type="evidence at protein level"/>
<keyword id="KW-0025">Alternative splicing</keyword>
<keyword id="KW-0175">Coiled coil</keyword>
<keyword id="KW-0225">Disease variant</keyword>
<keyword id="KW-0597">Phosphoprotein</keyword>
<keyword id="KW-1267">Proteomics identification</keyword>
<keyword id="KW-1185">Reference proteome</keyword>
<keyword id="KW-0879">Wnt signaling pathway</keyword>
<organism>
    <name type="scientific">Homo sapiens</name>
    <name type="common">Human</name>
    <dbReference type="NCBI Taxonomy" id="9606"/>
    <lineage>
        <taxon>Eukaryota</taxon>
        <taxon>Metazoa</taxon>
        <taxon>Chordata</taxon>
        <taxon>Craniata</taxon>
        <taxon>Vertebrata</taxon>
        <taxon>Euteleostomi</taxon>
        <taxon>Mammalia</taxon>
        <taxon>Eutheria</taxon>
        <taxon>Euarchontoglires</taxon>
        <taxon>Primates</taxon>
        <taxon>Haplorrhini</taxon>
        <taxon>Catarrhini</taxon>
        <taxon>Hominidae</taxon>
        <taxon>Homo</taxon>
    </lineage>
</organism>
<protein>
    <recommendedName>
        <fullName>Disheveled-associated activator of morphogenesis 2</fullName>
    </recommendedName>
</protein>
<sequence>MAPRKRSHHGLGFLCCFGGSDIPEINLRDNHPLQFMEFSSPIPNAEELNIRFAELVDELDLTDKNREAMFALPPEKKWQIYCSKKKEQEDPNKLATSWPDYYIDRINSMAAMQSLYAFDEEETEMRNQVVEDLKTALRTQPMRFVTRFIELEGLTCLLNFLRSMDHATCESRIHTSLIGCIKALMNNSQGRAHVLAQPEAISTIAQSLRTENSKTKVAVLEILGAVCLVPGGHKKVLQAMLHYQVYAAERTRFQTLLNELDRSLGRYRDEVNLKTAIMSFINAVLNAGAGEDNLEFRLHLRYEFLMLGIQPVIDKLRQHENAILDKHLDFFEMVRNEDDLELARRFDMVHIDTKSASQMFELIHKKLKYTEAYPCLLSVLHHCLQMPYKRNGGYFQQWQLLDRILQQIVLQDERGVDPDLAPLENFNVKNIVNMLINENEVKQWRDQAEKFRKEHMELVSRLERKERECETKTLEKEEMMRTLNKMKDKLARESQELRQARGQVAELVAQLSELSTGPVSSPPPPGGPLTLSSSMTTNDLPPPPPPLPFACCPPPPPPPLPPGGPPTPPGAPPCLGMGLPLPQDPYPSSDVPLRKKRVPQPSHPLKSFNWVKLNEERVPGTVWNEIDDMQVFRILDLEDFEKMFSAYQRHQKELGSTEDIYLASRKVKELSVIDGRRAQNCIILLSKLKLSNEEIRQAILKMDEQEDLAKDMLEQLLKFIPEKSDIDLLEEHKHEIERMARADRFLYEMSRIDHYQQRLQALFFKKKFQERLAEAKPKVEAILLASRELVRSKRLRQMLEVILAIGNFMNKGQRGGAYGFRVASLNKIADTKSSIDRNISLLHYLIMILEKHFPDILNMPSELQHLPEAAKVNLAELEKEVGNLRRGLRAVEVELEYQRRQVREPSDKFVPVMSDFITVSSFSFSELEDQLNEARDKFAKALMHFGEHDSKMQPDEFFGIFDTFLQAFSEARQDLEAMRRRKEEEERRARMEAMLKEQRERERWQRQRKVLAAGSSLEEGGEFDDLVSALRSGEVFDKDLCKLKRSRKRSGSQALEVTRERAINRLNY</sequence>